<feature type="chain" id="PRO_1000054658" description="Large ribosomal subunit protein uL16">
    <location>
        <begin position="1"/>
        <end position="138"/>
    </location>
</feature>
<feature type="region of interest" description="Disordered" evidence="2">
    <location>
        <begin position="1"/>
        <end position="22"/>
    </location>
</feature>
<feature type="compositionally biased region" description="Basic residues" evidence="2">
    <location>
        <begin position="1"/>
        <end position="17"/>
    </location>
</feature>
<feature type="strand" evidence="4">
    <location>
        <begin position="28"/>
        <end position="31"/>
    </location>
</feature>
<feature type="strand" evidence="4">
    <location>
        <begin position="33"/>
        <end position="36"/>
    </location>
</feature>
<feature type="strand" evidence="4">
    <location>
        <begin position="40"/>
        <end position="43"/>
    </location>
</feature>
<feature type="helix" evidence="4">
    <location>
        <begin position="44"/>
        <end position="57"/>
    </location>
</feature>
<feature type="strand" evidence="4">
    <location>
        <begin position="72"/>
        <end position="75"/>
    </location>
</feature>
<feature type="strand" evidence="4">
    <location>
        <begin position="90"/>
        <end position="97"/>
    </location>
</feature>
<feature type="strand" evidence="4">
    <location>
        <begin position="102"/>
        <end position="106"/>
    </location>
</feature>
<feature type="helix" evidence="4">
    <location>
        <begin position="112"/>
        <end position="124"/>
    </location>
</feature>
<feature type="strand" evidence="4">
    <location>
        <begin position="125"/>
        <end position="127"/>
    </location>
</feature>
<accession>A5U094</accession>
<keyword id="KW-0002">3D-structure</keyword>
<keyword id="KW-1185">Reference proteome</keyword>
<keyword id="KW-0687">Ribonucleoprotein</keyword>
<keyword id="KW-0689">Ribosomal protein</keyword>
<keyword id="KW-0694">RNA-binding</keyword>
<keyword id="KW-0699">rRNA-binding</keyword>
<keyword id="KW-0820">tRNA-binding</keyword>
<organism>
    <name type="scientific">Mycobacterium tuberculosis (strain ATCC 25177 / H37Ra)</name>
    <dbReference type="NCBI Taxonomy" id="419947"/>
    <lineage>
        <taxon>Bacteria</taxon>
        <taxon>Bacillati</taxon>
        <taxon>Actinomycetota</taxon>
        <taxon>Actinomycetes</taxon>
        <taxon>Mycobacteriales</taxon>
        <taxon>Mycobacteriaceae</taxon>
        <taxon>Mycobacterium</taxon>
        <taxon>Mycobacterium tuberculosis complex</taxon>
    </lineage>
</organism>
<protein>
    <recommendedName>
        <fullName evidence="1">Large ribosomal subunit protein uL16</fullName>
    </recommendedName>
    <alternativeName>
        <fullName evidence="3">50S ribosomal protein L16</fullName>
    </alternativeName>
</protein>
<comment type="function">
    <text evidence="1">Binds 23S rRNA and is also seen to make contacts with the A and possibly P site tRNAs.</text>
</comment>
<comment type="subunit">
    <text evidence="1">Part of the 50S ribosomal subunit.</text>
</comment>
<comment type="similarity">
    <text evidence="1">Belongs to the universal ribosomal protein uL16 family.</text>
</comment>
<gene>
    <name evidence="1" type="primary">rplP</name>
    <name type="ordered locus">MRA_0716</name>
</gene>
<dbReference type="EMBL" id="CP000611">
    <property type="protein sequence ID" value="ABQ72444.1"/>
    <property type="molecule type" value="Genomic_DNA"/>
</dbReference>
<dbReference type="RefSeq" id="WP_003403592.1">
    <property type="nucleotide sequence ID" value="NZ_CP016972.1"/>
</dbReference>
<dbReference type="PDB" id="7F0D">
    <property type="method" value="EM"/>
    <property type="resolution" value="3.30 A"/>
    <property type="chains" value="M=1-138"/>
</dbReference>
<dbReference type="PDBsum" id="7F0D"/>
<dbReference type="SMR" id="A5U094"/>
<dbReference type="KEGG" id="mra:MRA_0716"/>
<dbReference type="eggNOG" id="COG0197">
    <property type="taxonomic scope" value="Bacteria"/>
</dbReference>
<dbReference type="HOGENOM" id="CLU_078858_2_1_11"/>
<dbReference type="Proteomes" id="UP000001988">
    <property type="component" value="Chromosome"/>
</dbReference>
<dbReference type="GO" id="GO:0022625">
    <property type="term" value="C:cytosolic large ribosomal subunit"/>
    <property type="evidence" value="ECO:0007669"/>
    <property type="project" value="TreeGrafter"/>
</dbReference>
<dbReference type="GO" id="GO:0019843">
    <property type="term" value="F:rRNA binding"/>
    <property type="evidence" value="ECO:0007669"/>
    <property type="project" value="UniProtKB-UniRule"/>
</dbReference>
<dbReference type="GO" id="GO:0003735">
    <property type="term" value="F:structural constituent of ribosome"/>
    <property type="evidence" value="ECO:0007669"/>
    <property type="project" value="InterPro"/>
</dbReference>
<dbReference type="GO" id="GO:0000049">
    <property type="term" value="F:tRNA binding"/>
    <property type="evidence" value="ECO:0007669"/>
    <property type="project" value="UniProtKB-KW"/>
</dbReference>
<dbReference type="GO" id="GO:0006412">
    <property type="term" value="P:translation"/>
    <property type="evidence" value="ECO:0007669"/>
    <property type="project" value="UniProtKB-UniRule"/>
</dbReference>
<dbReference type="CDD" id="cd01433">
    <property type="entry name" value="Ribosomal_L16_L10e"/>
    <property type="match status" value="1"/>
</dbReference>
<dbReference type="FunFam" id="3.90.1170.10:FF:000001">
    <property type="entry name" value="50S ribosomal protein L16"/>
    <property type="match status" value="1"/>
</dbReference>
<dbReference type="Gene3D" id="3.90.1170.10">
    <property type="entry name" value="Ribosomal protein L10e/L16"/>
    <property type="match status" value="1"/>
</dbReference>
<dbReference type="HAMAP" id="MF_01342">
    <property type="entry name" value="Ribosomal_uL16"/>
    <property type="match status" value="1"/>
</dbReference>
<dbReference type="InterPro" id="IPR047873">
    <property type="entry name" value="Ribosomal_uL16"/>
</dbReference>
<dbReference type="InterPro" id="IPR000114">
    <property type="entry name" value="Ribosomal_uL16_bact-type"/>
</dbReference>
<dbReference type="InterPro" id="IPR020798">
    <property type="entry name" value="Ribosomal_uL16_CS"/>
</dbReference>
<dbReference type="InterPro" id="IPR016180">
    <property type="entry name" value="Ribosomal_uL16_dom"/>
</dbReference>
<dbReference type="InterPro" id="IPR036920">
    <property type="entry name" value="Ribosomal_uL16_sf"/>
</dbReference>
<dbReference type="NCBIfam" id="TIGR01164">
    <property type="entry name" value="rplP_bact"/>
    <property type="match status" value="1"/>
</dbReference>
<dbReference type="PANTHER" id="PTHR12220">
    <property type="entry name" value="50S/60S RIBOSOMAL PROTEIN L16"/>
    <property type="match status" value="1"/>
</dbReference>
<dbReference type="PANTHER" id="PTHR12220:SF13">
    <property type="entry name" value="LARGE RIBOSOMAL SUBUNIT PROTEIN UL16M"/>
    <property type="match status" value="1"/>
</dbReference>
<dbReference type="Pfam" id="PF00252">
    <property type="entry name" value="Ribosomal_L16"/>
    <property type="match status" value="1"/>
</dbReference>
<dbReference type="PRINTS" id="PR00060">
    <property type="entry name" value="RIBOSOMALL16"/>
</dbReference>
<dbReference type="SUPFAM" id="SSF54686">
    <property type="entry name" value="Ribosomal protein L16p/L10e"/>
    <property type="match status" value="1"/>
</dbReference>
<dbReference type="PROSITE" id="PS00586">
    <property type="entry name" value="RIBOSOMAL_L16_1"/>
    <property type="match status" value="1"/>
</dbReference>
<dbReference type="PROSITE" id="PS00701">
    <property type="entry name" value="RIBOSOMAL_L16_2"/>
    <property type="match status" value="1"/>
</dbReference>
<proteinExistence type="evidence at protein level"/>
<reference key="1">
    <citation type="journal article" date="2008" name="PLoS ONE">
        <title>Genetic basis of virulence attenuation revealed by comparative genomic analysis of Mycobacterium tuberculosis strain H37Ra versus H37Rv.</title>
        <authorList>
            <person name="Zheng H."/>
            <person name="Lu L."/>
            <person name="Wang B."/>
            <person name="Pu S."/>
            <person name="Zhang X."/>
            <person name="Zhu G."/>
            <person name="Shi W."/>
            <person name="Zhang L."/>
            <person name="Wang H."/>
            <person name="Wang S."/>
            <person name="Zhao G."/>
            <person name="Zhang Y."/>
        </authorList>
    </citation>
    <scope>NUCLEOTIDE SEQUENCE [LARGE SCALE GENOMIC DNA]</scope>
    <source>
        <strain>ATCC 25177 / H37Ra</strain>
    </source>
</reference>
<evidence type="ECO:0000255" key="1">
    <source>
        <dbReference type="HAMAP-Rule" id="MF_01342"/>
    </source>
</evidence>
<evidence type="ECO:0000256" key="2">
    <source>
        <dbReference type="SAM" id="MobiDB-lite"/>
    </source>
</evidence>
<evidence type="ECO:0000305" key="3"/>
<evidence type="ECO:0007829" key="4">
    <source>
        <dbReference type="PDB" id="7F0D"/>
    </source>
</evidence>
<sequence>MLIPRKVKHRKQHHPRQRGIASGGTTVNFGDYGIQALEHAYVTNRQIESARIAINRHIKRGGKVWINIFPDRPLTKKPAETRMGSGKGSPEWWVANVKPGRVLFELSYPNEGVARAALTRAIHKLPIKARIITREEQF</sequence>
<name>RL16_MYCTA</name>